<name>YIDC_PSEFS</name>
<comment type="function">
    <text evidence="1">Required for the insertion and/or proper folding and/or complex formation of integral membrane proteins into the membrane. Involved in integration of membrane proteins that insert both dependently and independently of the Sec translocase complex, as well as at least some lipoproteins. Aids folding of multispanning membrane proteins.</text>
</comment>
<comment type="subunit">
    <text evidence="1">Interacts with the Sec translocase complex via SecD. Specifically interacts with transmembrane segments of nascent integral membrane proteins during membrane integration.</text>
</comment>
<comment type="subcellular location">
    <subcellularLocation>
        <location evidence="1">Cell inner membrane</location>
        <topology evidence="1">Multi-pass membrane protein</topology>
    </subcellularLocation>
</comment>
<comment type="similarity">
    <text evidence="1">Belongs to the OXA1/ALB3/YidC family. Type 1 subfamily.</text>
</comment>
<protein>
    <recommendedName>
        <fullName evidence="1">Membrane protein insertase YidC</fullName>
    </recommendedName>
    <alternativeName>
        <fullName evidence="1">Foldase YidC</fullName>
    </alternativeName>
    <alternativeName>
        <fullName evidence="1">Membrane integrase YidC</fullName>
    </alternativeName>
    <alternativeName>
        <fullName evidence="1">Membrane protein YidC</fullName>
    </alternativeName>
</protein>
<keyword id="KW-0997">Cell inner membrane</keyword>
<keyword id="KW-1003">Cell membrane</keyword>
<keyword id="KW-0143">Chaperone</keyword>
<keyword id="KW-0472">Membrane</keyword>
<keyword id="KW-0653">Protein transport</keyword>
<keyword id="KW-0812">Transmembrane</keyword>
<keyword id="KW-1133">Transmembrane helix</keyword>
<keyword id="KW-0813">Transport</keyword>
<organism>
    <name type="scientific">Pseudomonas fluorescens (strain SBW25)</name>
    <dbReference type="NCBI Taxonomy" id="216595"/>
    <lineage>
        <taxon>Bacteria</taxon>
        <taxon>Pseudomonadati</taxon>
        <taxon>Pseudomonadota</taxon>
        <taxon>Gammaproteobacteria</taxon>
        <taxon>Pseudomonadales</taxon>
        <taxon>Pseudomonadaceae</taxon>
        <taxon>Pseudomonas</taxon>
    </lineage>
</organism>
<reference key="1">
    <citation type="journal article" date="2009" name="Genome Biol.">
        <title>Genomic and genetic analyses of diversity and plant interactions of Pseudomonas fluorescens.</title>
        <authorList>
            <person name="Silby M.W."/>
            <person name="Cerdeno-Tarraga A.M."/>
            <person name="Vernikos G.S."/>
            <person name="Giddens S.R."/>
            <person name="Jackson R.W."/>
            <person name="Preston G.M."/>
            <person name="Zhang X.-X."/>
            <person name="Moon C.D."/>
            <person name="Gehrig S.M."/>
            <person name="Godfrey S.A.C."/>
            <person name="Knight C.G."/>
            <person name="Malone J.G."/>
            <person name="Robinson Z."/>
            <person name="Spiers A.J."/>
            <person name="Harris S."/>
            <person name="Challis G.L."/>
            <person name="Yaxley A.M."/>
            <person name="Harris D."/>
            <person name="Seeger K."/>
            <person name="Murphy L."/>
            <person name="Rutter S."/>
            <person name="Squares R."/>
            <person name="Quail M.A."/>
            <person name="Saunders E."/>
            <person name="Mavromatis K."/>
            <person name="Brettin T.S."/>
            <person name="Bentley S.D."/>
            <person name="Hothersall J."/>
            <person name="Stephens E."/>
            <person name="Thomas C.M."/>
            <person name="Parkhill J."/>
            <person name="Levy S.B."/>
            <person name="Rainey P.B."/>
            <person name="Thomson N.R."/>
        </authorList>
    </citation>
    <scope>NUCLEOTIDE SEQUENCE [LARGE SCALE GENOMIC DNA]</scope>
    <source>
        <strain>SBW25</strain>
    </source>
</reference>
<feature type="chain" id="PRO_1000215975" description="Membrane protein insertase YidC">
    <location>
        <begin position="1"/>
        <end position="560"/>
    </location>
</feature>
<feature type="transmembrane region" description="Helical" evidence="1">
    <location>
        <begin position="7"/>
        <end position="27"/>
    </location>
</feature>
<feature type="transmembrane region" description="Helical" evidence="1">
    <location>
        <begin position="367"/>
        <end position="387"/>
    </location>
</feature>
<feature type="transmembrane region" description="Helical" evidence="1">
    <location>
        <begin position="437"/>
        <end position="457"/>
    </location>
</feature>
<feature type="transmembrane region" description="Helical" evidence="1">
    <location>
        <begin position="468"/>
        <end position="488"/>
    </location>
</feature>
<feature type="transmembrane region" description="Helical" evidence="1">
    <location>
        <begin position="515"/>
        <end position="535"/>
    </location>
</feature>
<feature type="region of interest" description="Disordered" evidence="2">
    <location>
        <begin position="43"/>
        <end position="72"/>
    </location>
</feature>
<gene>
    <name evidence="1" type="primary">yidC</name>
    <name type="ordered locus">PFLU_6134</name>
</gene>
<sequence>MDIKRTILIVALAIVSYVMVLKWNQDYGQAALPTQNVATNQAAPAIPDTPLGNNASASADVPSANGETSAPLETPVVTNKDLIHVKTDVLDLAIDPQGGDIAQLKLPLYPRRQDHPDVPFQLFDNGGERTYLAQSGLTGTNGPDARATGRPVYSTEQKTYQLADGQNQLNVDLKFSLDGVNYIKRFSFTRGLYDLKVTYLIDNESGKPWSGNLFAQLKRDASSDPSSSTATGTATYLGAALWTSNEPYKKVSMKDIDKGSLKETVQGGWVAWLQHYFVTAWIPNKGDANLVQTRKDSQGNYIIGFTGPALTVAPGAKAETSATLYAGPKSQAVLKELSPGLELTVDYGFLWFIAQPIFWLLQHIHSIVGNWGWSIIFLTMLIKGIFFPLSAASYKSMARMRAVAPKLAALKEQHGDDRQKMSQAMMELYKKEKINPLGGCLPILVQMPVFLSLYWVLLESVEMRQAPFMLWITDLSIKDPFFILPIIMGATMFIQQRLNPTPPDPMQAKVMKMMPIIFTFFFLWFPAGLVLYWVVNNVLSISQQWYITRKIEAATAKAAA</sequence>
<dbReference type="EMBL" id="AM181176">
    <property type="protein sequence ID" value="CAY53750.1"/>
    <property type="molecule type" value="Genomic_DNA"/>
</dbReference>
<dbReference type="RefSeq" id="WP_015886658.1">
    <property type="nucleotide sequence ID" value="NC_012660.1"/>
</dbReference>
<dbReference type="SMR" id="C3K1G2"/>
<dbReference type="STRING" id="294.SRM1_00054"/>
<dbReference type="GeneID" id="93467765"/>
<dbReference type="eggNOG" id="COG0706">
    <property type="taxonomic scope" value="Bacteria"/>
</dbReference>
<dbReference type="HOGENOM" id="CLU_016535_3_0_6"/>
<dbReference type="OrthoDB" id="9780552at2"/>
<dbReference type="GO" id="GO:0005886">
    <property type="term" value="C:plasma membrane"/>
    <property type="evidence" value="ECO:0007669"/>
    <property type="project" value="UniProtKB-SubCell"/>
</dbReference>
<dbReference type="GO" id="GO:0032977">
    <property type="term" value="F:membrane insertase activity"/>
    <property type="evidence" value="ECO:0007669"/>
    <property type="project" value="InterPro"/>
</dbReference>
<dbReference type="GO" id="GO:0051205">
    <property type="term" value="P:protein insertion into membrane"/>
    <property type="evidence" value="ECO:0007669"/>
    <property type="project" value="TreeGrafter"/>
</dbReference>
<dbReference type="GO" id="GO:0015031">
    <property type="term" value="P:protein transport"/>
    <property type="evidence" value="ECO:0007669"/>
    <property type="project" value="UniProtKB-KW"/>
</dbReference>
<dbReference type="CDD" id="cd20070">
    <property type="entry name" value="5TM_YidC_Alb3"/>
    <property type="match status" value="1"/>
</dbReference>
<dbReference type="CDD" id="cd19961">
    <property type="entry name" value="EcYidC-like_peri"/>
    <property type="match status" value="1"/>
</dbReference>
<dbReference type="Gene3D" id="2.70.98.90">
    <property type="match status" value="1"/>
</dbReference>
<dbReference type="HAMAP" id="MF_01810">
    <property type="entry name" value="YidC_type1"/>
    <property type="match status" value="1"/>
</dbReference>
<dbReference type="InterPro" id="IPR019998">
    <property type="entry name" value="Membr_insert_YidC"/>
</dbReference>
<dbReference type="InterPro" id="IPR028053">
    <property type="entry name" value="Membr_insert_YidC_N"/>
</dbReference>
<dbReference type="InterPro" id="IPR001708">
    <property type="entry name" value="YidC/ALB3/OXA1/COX18"/>
</dbReference>
<dbReference type="InterPro" id="IPR028055">
    <property type="entry name" value="YidC/Oxa/ALB_C"/>
</dbReference>
<dbReference type="InterPro" id="IPR047196">
    <property type="entry name" value="YidC_ALB_C"/>
</dbReference>
<dbReference type="InterPro" id="IPR038221">
    <property type="entry name" value="YidC_periplasmic_sf"/>
</dbReference>
<dbReference type="NCBIfam" id="NF002352">
    <property type="entry name" value="PRK01318.1-3"/>
    <property type="match status" value="1"/>
</dbReference>
<dbReference type="NCBIfam" id="NF002353">
    <property type="entry name" value="PRK01318.1-4"/>
    <property type="match status" value="1"/>
</dbReference>
<dbReference type="NCBIfam" id="TIGR03593">
    <property type="entry name" value="yidC_nterm"/>
    <property type="match status" value="1"/>
</dbReference>
<dbReference type="NCBIfam" id="TIGR03592">
    <property type="entry name" value="yidC_oxa1_cterm"/>
    <property type="match status" value="1"/>
</dbReference>
<dbReference type="PANTHER" id="PTHR12428:SF65">
    <property type="entry name" value="CYTOCHROME C OXIDASE ASSEMBLY PROTEIN COX18, MITOCHONDRIAL"/>
    <property type="match status" value="1"/>
</dbReference>
<dbReference type="PANTHER" id="PTHR12428">
    <property type="entry name" value="OXA1"/>
    <property type="match status" value="1"/>
</dbReference>
<dbReference type="Pfam" id="PF02096">
    <property type="entry name" value="60KD_IMP"/>
    <property type="match status" value="1"/>
</dbReference>
<dbReference type="Pfam" id="PF14849">
    <property type="entry name" value="YidC_periplas"/>
    <property type="match status" value="1"/>
</dbReference>
<dbReference type="PRINTS" id="PR00701">
    <property type="entry name" value="60KDINNERMP"/>
</dbReference>
<dbReference type="PRINTS" id="PR01900">
    <property type="entry name" value="YIDCPROTEIN"/>
</dbReference>
<evidence type="ECO:0000255" key="1">
    <source>
        <dbReference type="HAMAP-Rule" id="MF_01810"/>
    </source>
</evidence>
<evidence type="ECO:0000256" key="2">
    <source>
        <dbReference type="SAM" id="MobiDB-lite"/>
    </source>
</evidence>
<accession>C3K1G2</accession>
<proteinExistence type="inferred from homology"/>